<sequence>APSYRVRRTDISGHAEEAVVNAANAKGTVGDGVCRAVARKWPDSFKGAATPVGTAKLVQANGMNVIHAVGPNFSTVTEAEGDRELAAAYRAVAGIINASNIKSVAIPLLSTGVFSGGKDRVMQSLNHLFTAMDTTDADVVIYCRDKAWEKKIQEAIDRRTAVELVSEDISLESDLIRVHPDSCLVGRKGYSITDGKLHSYLEGTRFHQTAVDMAEISTLWPKLQDANEQICLYALGESMDSIRTKCPVEDADSSTPPKTVPCLCRYAMTAERVARLRMNNTKAIIVCSSFPLPKYRIEGVQKVKCDRVLIFDQTVPSLVSPRKYIPAAASTHADTVSLDSTVSTGSAWSFPSEATYETMEVVAEVHHSEPPVPPPRRRRAQVTMHHQELLEVSDMHTPIAARVEIPVYDTAVVVERVAIPCTSEYAKPIPAPRAARVVPVPAPRIQRASTYRVSPTPTPRVLRASVCSVTTSAGVEFPWAPEDLEVLTEPVHCKMREPVELPWEPEDVDIQFGDFETSDKIQFGDIDFDQFXLGRAGAYIFSSDTGPGHLQQKSVRQHALPCEMLYVHEEERTYPPALDEAREKLLQAKMQMAPTEANKSRYQSRKVENMKAVIIDRLKDGARTYLTEQSEKIPTYVSKYPRPVYSPSVEDSLQNPEVAVAACNAFLEANYPTVASYQITDEYDAYLDMVDGSESCLDRATFCPAKLRCYPKHHAYHQPQVRSAVPSPFQNTLQNVLAAATKRNCNVTQMRELPTLDSAVLNVECFKKFACNGEYWQEFKDNPIRITTENITTYVTRLKGPKAAALFAKTHNLVPLQEVPMDRFVVDMKRDVKVTPGTKHTEERPKVQVIQAAEPLATAYLCGIHRELVRRLKAVLAPNIHTLFDMSAEDFDAIIAAHFQPGDAVLETDIASFDKSQDDSLALTALMLLEDLGVDQELLDLIEAAFGEITSVHLPTGTRFKFGAMMKSGMFLTLFVNTLLNIVIACRVLREKLTNSVCAAFIGDDNIVHGVRSDPLMAERCASWVNMEVKIIDATMCEKPPYFCGGFILYDKVTGSACRVADPLKRLFKLGKPLPAGDTQDEDRRRALKDETDRWARVGLKSELEIALSSRYEVNGTGNIVRAMATLAKSLKNFKKLRGPIVHLYGGPK</sequence>
<organism>
    <name type="scientific">Ross river virus (strain T48)</name>
    <name type="common">RRV</name>
    <dbReference type="NCBI Taxonomy" id="11032"/>
    <lineage>
        <taxon>Viruses</taxon>
        <taxon>Riboviria</taxon>
        <taxon>Orthornavirae</taxon>
        <taxon>Kitrinoviricota</taxon>
        <taxon>Alsuviricetes</taxon>
        <taxon>Martellivirales</taxon>
        <taxon>Togaviridae</taxon>
        <taxon>Alphavirus</taxon>
        <taxon>Ross River virus</taxon>
    </lineage>
</organism>
<name>POLN_RRVT</name>
<protein>
    <recommendedName>
        <fullName>Polyprotein nsP1234</fullName>
        <shortName>P1234</shortName>
    </recommendedName>
    <alternativeName>
        <fullName>Non-structural polyprotein</fullName>
    </alternativeName>
    <component>
        <recommendedName>
            <fullName>Polyprotein P123'</fullName>
            <shortName>P123'</shortName>
        </recommendedName>
    </component>
    <component>
        <recommendedName>
            <fullName>Polyprotein P123</fullName>
            <shortName>P123</shortName>
        </recommendedName>
    </component>
    <component>
        <recommendedName>
            <fullName>Non-structural protein 3'</fullName>
            <shortName>nsP3'</shortName>
            <ecNumber evidence="9">3.1.3.84</ecNumber>
        </recommendedName>
    </component>
    <component>
        <recommendedName>
            <fullName>Non-structural protein 3</fullName>
            <shortName>nsP3</shortName>
            <ecNumber evidence="6">3.1.3.84</ecNumber>
        </recommendedName>
    </component>
    <component>
        <recommendedName>
            <fullName>RNA-directed RNA polymerase nsP4</fullName>
            <ecNumber evidence="2">2.7.7.19</ecNumber>
            <ecNumber evidence="8">2.7.7.48</ecNumber>
        </recommendedName>
        <alternativeName>
            <fullName>Non-structural protein 4</fullName>
            <shortName>nsP4</shortName>
        </alternativeName>
    </component>
</protein>
<evidence type="ECO:0000250" key="1">
    <source>
        <dbReference type="UniProtKB" id="O90368"/>
    </source>
</evidence>
<evidence type="ECO:0000250" key="2">
    <source>
        <dbReference type="UniProtKB" id="P03317"/>
    </source>
</evidence>
<evidence type="ECO:0000250" key="3">
    <source>
        <dbReference type="UniProtKB" id="P08411"/>
    </source>
</evidence>
<evidence type="ECO:0000250" key="4">
    <source>
        <dbReference type="UniProtKB" id="P27282"/>
    </source>
</evidence>
<evidence type="ECO:0000250" key="5">
    <source>
        <dbReference type="UniProtKB" id="P36328"/>
    </source>
</evidence>
<evidence type="ECO:0000250" key="6">
    <source>
        <dbReference type="UniProtKB" id="Q8JUX6"/>
    </source>
</evidence>
<evidence type="ECO:0000255" key="7">
    <source>
        <dbReference type="PROSITE-ProRule" id="PRU00490"/>
    </source>
</evidence>
<evidence type="ECO:0000255" key="8">
    <source>
        <dbReference type="PROSITE-ProRule" id="PRU00539"/>
    </source>
</evidence>
<evidence type="ECO:0000305" key="9"/>
<evidence type="ECO:0007829" key="10">
    <source>
        <dbReference type="PDB" id="7F0S"/>
    </source>
</evidence>
<accession>P13888</accession>
<comment type="function">
    <text evidence="6">Polyprotein P1234: Inactive precursor of the viral replicase, which is activated by cleavages carried out by the viral protease nsP2.</text>
</comment>
<comment type="function">
    <molecule>Polyprotein P123</molecule>
    <text evidence="2">The early replication complex formed by the polyprotein P123 and nsP4 synthesizes minus-strand RNAs (By similarity). As soon P123 is cleaved into mature proteins, the plus-strand RNAs synthesis begins (By similarity).</text>
</comment>
<comment type="function">
    <molecule>Polyprotein P123'</molecule>
    <text evidence="9">The early replication complex formed by the polyprotein P123' and nsP4 synthesizes minus-strand RNAs (Probable). Polyprotein P123' is a short-lived polyprotein that accumulates during early stage of infection (Probable). As soon P123' is cleaved into mature proteins, the plus-strand RNAs synthesis begins (Probable).</text>
</comment>
<comment type="function">
    <molecule>Non-structural protein 3'</molecule>
    <text evidence="2 9">Seems to be essential for minus-strand RNAs and subgenomic 26S mRNAs synthesis (By similarity). Displays mono-ADP-ribosylhydrolase activity (Probable). ADP-ribosylation is a post-translational modification that controls various processes of the host cell and the virus probably needs to revert it for optimal viral replication (Probable). Binds proteins of FXR family and sequesters them into the viral RNA replication complexes thereby inhibiting the formation of host stress granules on viral mRNAs (Probable). The nsp3'-FXR complexes bind viral RNAs and probably orchestrate the assembly of viral replication complexes, thanks to the ability of FXR family members to self-assemble and bind DNA (Probable).</text>
</comment>
<comment type="function">
    <molecule>Non-structural protein 3</molecule>
    <text evidence="2 6">Seems to be essential for minus-strand RNAs and subgenomic 26S mRNAs synthesis (By similarity). Displays mono-ADP-ribosylhydrolase activity (By similarity). ADP-ribosylation is a post-translational modification that controls various processes of the host cell and the virus probably needs to revert it for optimal viral replication (By similarity). Binds proteins of G3BP family and sequesters them into the viral RNA replication complexes thereby inhibiting the formation of host stress granules on viral mRNAs (By similarity). The nsp3-G3BP complexes bind viral RNAs and probably orchestrate the assembly of viral replication complexes, thanks to the ability of G3BP family members to self-assemble and bind DNA (By similarity).</text>
</comment>
<comment type="function">
    <molecule>RNA-directed RNA polymerase nsP4</molecule>
    <text evidence="2">RNA dependent RNA polymerase (By similarity). Replicates genomic and antigenomic RNA by recognizing replications specific signals. The early replication complex formed by the polyprotein P123 and nsP4 synthesizes minus-strand RNAs (By similarity). The late replication complex composed of fully processed nsP1-nsP4 is responsible for the production of genomic and subgenomic plus-strand RNAs (By similarity).</text>
</comment>
<comment type="catalytic activity">
    <reaction evidence="8">
        <text>RNA(n) + a ribonucleoside 5'-triphosphate = RNA(n+1) + diphosphate</text>
        <dbReference type="Rhea" id="RHEA:21248"/>
        <dbReference type="Rhea" id="RHEA-COMP:14527"/>
        <dbReference type="Rhea" id="RHEA-COMP:17342"/>
        <dbReference type="ChEBI" id="CHEBI:33019"/>
        <dbReference type="ChEBI" id="CHEBI:61557"/>
        <dbReference type="ChEBI" id="CHEBI:140395"/>
        <dbReference type="EC" id="2.7.7.48"/>
    </reaction>
</comment>
<comment type="catalytic activity">
    <reaction evidence="6">
        <text>4-O-(ADP-D-ribosyl)-L-aspartyl-[protein] + H2O = L-aspartyl-[protein] + ADP-D-ribose + H(+)</text>
        <dbReference type="Rhea" id="RHEA:54428"/>
        <dbReference type="Rhea" id="RHEA-COMP:9867"/>
        <dbReference type="Rhea" id="RHEA-COMP:13832"/>
        <dbReference type="ChEBI" id="CHEBI:15377"/>
        <dbReference type="ChEBI" id="CHEBI:15378"/>
        <dbReference type="ChEBI" id="CHEBI:29961"/>
        <dbReference type="ChEBI" id="CHEBI:57967"/>
        <dbReference type="ChEBI" id="CHEBI:138102"/>
    </reaction>
    <physiologicalReaction direction="left-to-right" evidence="6">
        <dbReference type="Rhea" id="RHEA:54429"/>
    </physiologicalReaction>
</comment>
<comment type="catalytic activity">
    <reaction evidence="6">
        <text>5-O-(ADP-D-ribosyl)-L-glutamyl-[protein] + H2O = L-glutamyl-[protein] + ADP-D-ribose + H(+)</text>
        <dbReference type="Rhea" id="RHEA:58248"/>
        <dbReference type="Rhea" id="RHEA-COMP:10208"/>
        <dbReference type="Rhea" id="RHEA-COMP:15089"/>
        <dbReference type="ChEBI" id="CHEBI:15377"/>
        <dbReference type="ChEBI" id="CHEBI:15378"/>
        <dbReference type="ChEBI" id="CHEBI:29973"/>
        <dbReference type="ChEBI" id="CHEBI:57967"/>
        <dbReference type="ChEBI" id="CHEBI:142540"/>
    </reaction>
    <physiologicalReaction direction="left-to-right" evidence="6">
        <dbReference type="Rhea" id="RHEA:58249"/>
    </physiologicalReaction>
</comment>
<comment type="catalytic activity">
    <reaction evidence="2">
        <text>RNA(n) + ATP = RNA(n)-3'-adenine ribonucleotide + diphosphate</text>
        <dbReference type="Rhea" id="RHEA:11332"/>
        <dbReference type="Rhea" id="RHEA-COMP:14527"/>
        <dbReference type="Rhea" id="RHEA-COMP:17347"/>
        <dbReference type="ChEBI" id="CHEBI:30616"/>
        <dbReference type="ChEBI" id="CHEBI:33019"/>
        <dbReference type="ChEBI" id="CHEBI:140395"/>
        <dbReference type="ChEBI" id="CHEBI:173115"/>
        <dbReference type="EC" id="2.7.7.19"/>
    </reaction>
</comment>
<comment type="catalytic activity">
    <reaction evidence="6">
        <text>ADP-alpha-D-ribose 1''-phosphate + H2O = ADP-D-ribose + phosphate</text>
        <dbReference type="Rhea" id="RHEA:25029"/>
        <dbReference type="ChEBI" id="CHEBI:15377"/>
        <dbReference type="ChEBI" id="CHEBI:43474"/>
        <dbReference type="ChEBI" id="CHEBI:57967"/>
        <dbReference type="ChEBI" id="CHEBI:58753"/>
        <dbReference type="EC" id="3.1.3.84"/>
    </reaction>
    <physiologicalReaction direction="left-to-right" evidence="6">
        <dbReference type="Rhea" id="RHEA:25030"/>
    </physiologicalReaction>
</comment>
<comment type="cofactor">
    <cofactor evidence="2">
        <name>Mg(2+)</name>
        <dbReference type="ChEBI" id="CHEBI:18420"/>
    </cofactor>
    <cofactor evidence="2">
        <name>Mn(2+)</name>
        <dbReference type="ChEBI" id="CHEBI:29035"/>
    </cofactor>
    <text evidence="2">For nsP4 adenylyltransferase activity; Mn(2+) supports catalysis at 60% of the levels observed with Mg(2+).</text>
</comment>
<comment type="cofactor">
    <cofactor>
        <name>Mg(2+)</name>
        <dbReference type="ChEBI" id="CHEBI:18420"/>
    </cofactor>
    <text evidence="2">For nsP4 RNA-directed RNA polymerase activity.</text>
</comment>
<comment type="subunit">
    <molecule>Non-structural protein 3</molecule>
    <text evidence="2 4 6">Interacts with mRNA-capping enzyme nsP1 (By similarity). Interacts with host DDX1 (By similarity). RNA-directed Interacts with host DDX3 (By similarity). Interacts (via C-terminus) with host G3BP1; this interaction inhibits the formation of host stress granules on viral mRNAs and the nsp3-G3BP1 complexes bind viral RNAs and probably orchestrate the assembly of viral replication complexes (By similarity). Interacts (via C-terminus) with host G3BP2; this interaction inhibits the formation of host stress granules on viral mRNAs and the nsp3-G3BP2 complexes bind viral RNAs and probably orchestrate the assembly of viral replication complexes (By similarity).</text>
</comment>
<comment type="subunit">
    <molecule>RNA-directed RNA polymerase nsP4</molecule>
    <text evidence="6">Interacts with itself. Interacts with mRNA-capping enzyme nsP1. Interacts with protease nsP2. Interacts with itself.</text>
</comment>
<comment type="subcellular location">
    <molecule>Polyprotein P123'</molecule>
    <subcellularLocation>
        <location evidence="9">Host cytoplasmic vesicle membrane</location>
        <topology evidence="9">Peripheral membrane protein</topology>
    </subcellularLocation>
    <text evidence="9">Part of cytoplasmic vesicles, which are probably formed at the plasma membrane and internalized leading to late endosomal/lysosomal spherules containing the replication complex.</text>
</comment>
<comment type="subcellular location">
    <molecule>Polyprotein P123</molecule>
    <subcellularLocation>
        <location evidence="9">Host cytoplasmic vesicle membrane</location>
        <topology evidence="9">Peripheral membrane protein</topology>
    </subcellularLocation>
    <text evidence="9">Part of cytoplasmic vesicles, which are probably formed at the plasma membrane and internalized leading to late endosomal/lysosomal spherules containing the replication complex.</text>
</comment>
<comment type="subcellular location">
    <molecule>Non-structural protein 3'</molecule>
    <subcellularLocation>
        <location evidence="2">Host cytoplasmic vesicle membrane</location>
        <topology evidence="9">Peripheral membrane protein</topology>
    </subcellularLocation>
    <text evidence="2">In the late phase of infection, the polyprotein is quickly cleaved before localization to cellular membranes. Then nsP3 and nsP3' form aggregates in cytoplasm (By similarity). NsP3' is also part of cytoplasmic vesicles, which are probably formed at the plasma membrane and internalized leading to late endosomal/lysosomal spherules containing the replication complex (By similarity).</text>
</comment>
<comment type="subcellular location">
    <molecule>Non-structural protein 3</molecule>
    <subcellularLocation>
        <location evidence="2">Host cytoplasmic vesicle membrane</location>
        <topology evidence="9">Peripheral membrane protein</topology>
    </subcellularLocation>
    <text evidence="2">In the late phase of infection, the polyprotein is quickly cleaved before localization to cellular membranes. Then nsP3 and nsP3' form aggregates in cytoplasm (By similarity). NsP3 is also part of cytoplasmic vesicles, which are probably formed at the plasma membrane and internalized leading to late endosomal/lysosomal spherules containing the replication complex (By similarity).</text>
</comment>
<comment type="subcellular location">
    <molecule>RNA-directed RNA polymerase nsP4</molecule>
    <subcellularLocation>
        <location>Host cytoplasmic vesicle membrane</location>
        <topology evidence="3">Peripheral membrane protein</topology>
    </subcellularLocation>
    <text evidence="3">NsP4 is part of cytoplasmic vesicles, which are probably formed at the plasma membrane and internalized leading to late endosomal/lysosomal spherules containing the replication complex.</text>
</comment>
<comment type="domain">
    <molecule>Non-structural protein 3</molecule>
    <text evidence="2 6">In the N-terminus, the macro domain displays a mono-ADP-ribosylhydrolase activity (By similarity). The central part has a zinc-binding function (By similarity). The C-terminus contains two FGDF motifs necessary and sufficient for formation of the nsP3/G3BP1 complex (By similarity).</text>
</comment>
<comment type="domain">
    <molecule>Non-structural protein 3'</molecule>
    <text evidence="2 6">In the N-terminus, the macro domain displays a mono-ADP-ribosylhydrolase activity (By similarity). The central part has a zinc-binding function (By similarity). The C-terminus contains two FGDF motifs necessary and sufficient for formation of the nsP3'/G3BP1 complex (By similarity).</text>
</comment>
<comment type="PTM">
    <text evidence="2">Polyprotein P1234: Specific enzymatic cleavages in vivo yield mature proteins (By similarity). The processing of the polyprotein is temporally regulated (By similarity). In early stages (1.7 hpi), P1234 is first cleaved in trans through its nsP2 protease activity, releasing P123' and nsP4, which associate to form the early replication complex (By similarity). At the same time, P1234 is also cut at the nsP1/nsP2 site early in infection but with lower efficiency (By similarity). After replication of the viral minus-strand RNAs (4 hpi), the polyproteins are cut at the nsP1/nsP2 and nsP2/nsP3 sites very efficiently, preventing accumulation of P123' and P1234 and allowing the formation of the late replication complex (By similarity). NsP3'/nsP4 site is not cleaved anymore and P34 is produced rather than nsP4 (By similarity).</text>
</comment>
<comment type="PTM">
    <molecule>Polyprotein P123</molecule>
    <text evidence="2">Specific enzymatic cleavages in vivo yield mature proteins (By similarity). The processing of the polyprotein is temporally regulated (By similarity). In early stages (1.7 hpi), P123 is cleaved at the nsP1/nsP2 site with low efficiency (By similarity). After replication of the viral minus-strand RNAs (4 hpi), the polyproteins are cut at the nsP1/nsP2 and nsP2/nsP3 sites very efficiently, preventing accumulation of P123 and allowing the formation of the late replication complex (By similarity).</text>
</comment>
<comment type="PTM">
    <molecule>Non-structural protein 3</molecule>
    <text evidence="3">Phosphorylated by host on serines and threonines.</text>
</comment>
<comment type="PTM">
    <molecule>Non-structural protein 3'</molecule>
    <text evidence="3">Phosphorylated by host on serines and threonines.</text>
</comment>
<comment type="PTM">
    <molecule>RNA-directed RNA polymerase nsP4</molecule>
    <text evidence="2">Ubiquitinated; targets the protein for rapid degradation via the ubiquitin system (By similarity). Nsp4 is present in extremely low quantities due to low frequency of translation through the amber stop-codon and the degradation by the ubiquitin pathway (By similarity).</text>
</comment>
<comment type="miscellaneous">
    <text evidence="2">Viral replication produces dsRNA in the late phase of infection, resulting in a strong activation of host EIF2AK2/PKR, leading to almost complete phosphorylation of EIF2A (By similarity). This inactivates completely cellular translation initiation, resulting shutoff of host proteins synthesis (By similarity). However, phosphorylation of EIF2A is probably not the only mechanism responsible for the host translation shutoff (By similarity). The viral translation can still occur normally because it relies on a hairpin structure in the coding region of sgRNA and is EIF2A-, EIF2D-, EIF4G- EIF4A-independent (By similarity).</text>
</comment>
<comment type="miscellaneous">
    <text evidence="1 2 9">The genome codes for P123, but readthrough of a terminator codon UGA occurs between the codons for Phe-531 and Leu-533 giving rise to P1234 (Probable). P1234 is cleaved quickly by nsP2 into P123' and nsP4 (By similarity). Further processing of p123' gives nsP1, nsP2 and nsP3' which is 6 amino acids longer than nsP3 since the cleavage site is after the readthrough (By similarity). This unusual molecular mechanism ensures that few nsP4 are produced compared to other non-structural proteins (By similarity). Mutant viruses with no alternative termination site grow significantly slower than wild-type virus (By similarity). The opal termination codon is frequently mutated to a sense codon on passage in cell culture (By similarity). The presence of the opal codon may be a requirement for viral maintenance in both vertebrate and invertebrate hosts and a selective advantage may be conferred in cell culture for the sense codon (By similarity).</text>
</comment>
<feature type="chain" id="PRO_0000308401" description="Polyprotein nsP1234">
    <location>
        <begin position="1" status="less than"/>
        <end position="1149" status="greater than"/>
    </location>
</feature>
<feature type="chain" id="PRO_0000446654" description="Polyprotein P123'">
    <location>
        <begin position="1" status="less than"/>
        <end position="538"/>
    </location>
</feature>
<feature type="chain" id="PRO_0000446655" description="Polyprotein P123">
    <location>
        <begin position="1" status="less than"/>
        <end position="531"/>
    </location>
</feature>
<feature type="chain" id="PRO_0000041222" description="Non-structural protein 3'">
    <location>
        <begin position="1"/>
        <end position="538"/>
    </location>
</feature>
<feature type="chain" id="PRO_0000446656" description="Non-structural protein 3">
    <location>
        <begin position="1"/>
        <end position="531"/>
    </location>
</feature>
<feature type="chain" id="PRO_0000041223" description="RNA-directed RNA polymerase nsP4">
    <location>
        <begin position="539"/>
        <end position="1149"/>
    </location>
</feature>
<feature type="domain" description="Macro" evidence="7">
    <location>
        <begin position="1" status="less than"/>
        <end position="160"/>
    </location>
</feature>
<feature type="domain" description="RdRp catalytic" evidence="8">
    <location>
        <begin position="903"/>
        <end position="1018"/>
    </location>
</feature>
<feature type="short sequence motif" description="FGDF; binding to host G3BP1" evidence="3">
    <location>
        <begin position="512"/>
        <end position="515"/>
    </location>
</feature>
<feature type="short sequence motif" description="FGDF; binding to host G3BP1" evidence="3">
    <location>
        <begin position="523"/>
        <end position="526"/>
    </location>
</feature>
<feature type="binding site" evidence="5">
    <location>
        <position position="10"/>
    </location>
    <ligand>
        <name>ADP-D-ribose</name>
        <dbReference type="ChEBI" id="CHEBI:57967"/>
    </ligand>
</feature>
<feature type="binding site" evidence="6">
    <location>
        <position position="24"/>
    </location>
    <ligand>
        <name>ADP-D-ribose</name>
        <dbReference type="ChEBI" id="CHEBI:57967"/>
    </ligand>
</feature>
<feature type="binding site" evidence="6">
    <location>
        <position position="32"/>
    </location>
    <ligand>
        <name>ADP-D-ribose</name>
        <dbReference type="ChEBI" id="CHEBI:57967"/>
    </ligand>
</feature>
<feature type="binding site" evidence="5">
    <location>
        <position position="112"/>
    </location>
    <ligand>
        <name>ADP-D-ribose</name>
        <dbReference type="ChEBI" id="CHEBI:57967"/>
    </ligand>
</feature>
<feature type="binding site" evidence="6">
    <location>
        <position position="113"/>
    </location>
    <ligand>
        <name>ADP-D-ribose</name>
        <dbReference type="ChEBI" id="CHEBI:57967"/>
    </ligand>
</feature>
<feature type="binding site" evidence="5">
    <location>
        <position position="114"/>
    </location>
    <ligand>
        <name>ADP-D-ribose</name>
        <dbReference type="ChEBI" id="CHEBI:57967"/>
    </ligand>
</feature>
<feature type="binding site" evidence="2">
    <location>
        <position position="262"/>
    </location>
    <ligand>
        <name>Zn(2+)</name>
        <dbReference type="ChEBI" id="CHEBI:29105"/>
    </ligand>
</feature>
<feature type="binding site" evidence="2">
    <location>
        <position position="264"/>
    </location>
    <ligand>
        <name>Zn(2+)</name>
        <dbReference type="ChEBI" id="CHEBI:29105"/>
    </ligand>
</feature>
<feature type="binding site" evidence="2">
    <location>
        <position position="287"/>
    </location>
    <ligand>
        <name>Zn(2+)</name>
        <dbReference type="ChEBI" id="CHEBI:29105"/>
    </ligand>
</feature>
<feature type="binding site" evidence="2">
    <location>
        <position position="305"/>
    </location>
    <ligand>
        <name>Zn(2+)</name>
        <dbReference type="ChEBI" id="CHEBI:29105"/>
    </ligand>
</feature>
<feature type="site" description="Cleavage; by protease nsP2" evidence="6">
    <location>
        <begin position="538"/>
        <end position="539"/>
    </location>
</feature>
<feature type="modified residue" description="Phosphothreonine; by host" evidence="6">
    <location>
        <position position="344"/>
    </location>
</feature>
<feature type="non-terminal residue">
    <location>
        <position position="1"/>
    </location>
</feature>
<feature type="non-terminal residue">
    <location>
        <position position="1149"/>
    </location>
</feature>
<feature type="helix" evidence="10">
    <location>
        <begin position="652"/>
        <end position="654"/>
    </location>
</feature>
<feature type="helix" evidence="10">
    <location>
        <begin position="656"/>
        <end position="669"/>
    </location>
</feature>
<feature type="strand" evidence="10">
    <location>
        <begin position="728"/>
        <end position="730"/>
    </location>
</feature>
<feature type="helix" evidence="10">
    <location>
        <begin position="731"/>
        <end position="742"/>
    </location>
</feature>
<feature type="turn" evidence="10">
    <location>
        <begin position="743"/>
        <end position="746"/>
    </location>
</feature>
<feature type="helix" evidence="10">
    <location>
        <begin position="753"/>
        <end position="769"/>
    </location>
</feature>
<feature type="helix" evidence="10">
    <location>
        <begin position="776"/>
        <end position="781"/>
    </location>
</feature>
<feature type="helix" evidence="10">
    <location>
        <begin position="788"/>
        <end position="795"/>
    </location>
</feature>
<feature type="turn" evidence="10">
    <location>
        <begin position="796"/>
        <end position="799"/>
    </location>
</feature>
<feature type="helix" evidence="10">
    <location>
        <begin position="801"/>
        <end position="810"/>
    </location>
</feature>
<feature type="helix" evidence="10">
    <location>
        <begin position="821"/>
        <end position="823"/>
    </location>
</feature>
<feature type="strand" evidence="10">
    <location>
        <begin position="825"/>
        <end position="827"/>
    </location>
</feature>
<feature type="strand" evidence="10">
    <location>
        <begin position="847"/>
        <end position="849"/>
    </location>
</feature>
<feature type="helix" evidence="10">
    <location>
        <begin position="854"/>
        <end position="875"/>
    </location>
</feature>
<feature type="strand" evidence="10">
    <location>
        <begin position="880"/>
        <end position="883"/>
    </location>
</feature>
<feature type="helix" evidence="10">
    <location>
        <begin position="888"/>
        <end position="898"/>
    </location>
</feature>
<feature type="strand" evidence="10">
    <location>
        <begin position="904"/>
        <end position="910"/>
    </location>
</feature>
<feature type="helix" evidence="10">
    <location>
        <begin position="920"/>
        <end position="932"/>
    </location>
</feature>
<feature type="helix" evidence="10">
    <location>
        <begin position="936"/>
        <end position="946"/>
    </location>
</feature>
<feature type="turn" evidence="10">
    <location>
        <begin position="947"/>
        <end position="951"/>
    </location>
</feature>
<feature type="helix" evidence="10">
    <location>
        <begin position="964"/>
        <end position="989"/>
    </location>
</feature>
<feature type="helix" evidence="10">
    <location>
        <begin position="991"/>
        <end position="994"/>
    </location>
</feature>
<feature type="strand" evidence="10">
    <location>
        <begin position="999"/>
        <end position="1002"/>
    </location>
</feature>
<feature type="strand" evidence="10">
    <location>
        <begin position="1005"/>
        <end position="1009"/>
    </location>
</feature>
<feature type="turn" evidence="10">
    <location>
        <begin position="1015"/>
        <end position="1017"/>
    </location>
</feature>
<feature type="helix" evidence="10">
    <location>
        <begin position="1018"/>
        <end position="1021"/>
    </location>
</feature>
<feature type="strand" evidence="10">
    <location>
        <begin position="1024"/>
        <end position="1026"/>
    </location>
</feature>
<feature type="strand" evidence="10">
    <location>
        <begin position="1029"/>
        <end position="1035"/>
    </location>
</feature>
<feature type="turn" evidence="10">
    <location>
        <begin position="1036"/>
        <end position="1038"/>
    </location>
</feature>
<feature type="strand" evidence="10">
    <location>
        <begin position="1044"/>
        <end position="1051"/>
    </location>
</feature>
<feature type="turn" evidence="10">
    <location>
        <begin position="1052"/>
        <end position="1055"/>
    </location>
</feature>
<feature type="strand" evidence="10">
    <location>
        <begin position="1056"/>
        <end position="1061"/>
    </location>
</feature>
<feature type="helix" evidence="10">
    <location>
        <begin position="1063"/>
        <end position="1069"/>
    </location>
</feature>
<feature type="strand" evidence="10">
    <location>
        <begin position="1076"/>
        <end position="1078"/>
    </location>
</feature>
<feature type="turn" evidence="10">
    <location>
        <begin position="1081"/>
        <end position="1086"/>
    </location>
</feature>
<feature type="helix" evidence="10">
    <location>
        <begin position="1087"/>
        <end position="1095"/>
    </location>
</feature>
<feature type="turn" evidence="10">
    <location>
        <begin position="1098"/>
        <end position="1100"/>
    </location>
</feature>
<feature type="helix" evidence="10">
    <location>
        <begin position="1101"/>
        <end position="1111"/>
    </location>
</feature>
<feature type="helix" evidence="10">
    <location>
        <begin position="1120"/>
        <end position="1123"/>
    </location>
</feature>
<feature type="helix" evidence="10">
    <location>
        <begin position="1133"/>
        <end position="1135"/>
    </location>
</feature>
<reference key="1">
    <citation type="journal article" date="1988" name="Virology">
        <title>Nonstructural proteins nsP3 and nsP4 of Ross River and O'Nyong-nyong viruses: sequence and comparison with those of other alphaviruses.</title>
        <authorList>
            <person name="Strauss E.G."/>
            <person name="Levinson R."/>
            <person name="Rice C.M."/>
            <person name="Dalrymple J."/>
            <person name="Strauss J.H."/>
        </authorList>
    </citation>
    <scope>NUCLEOTIDE SEQUENCE [GENOMIC RNA]</scope>
</reference>
<reference key="2">
    <citation type="journal article" date="1982" name="Proc. Natl. Acad. Sci. U.S.A.">
        <title>Sequence studies of several alphavirus genomic RNAs in the region containing the start of the subgenomic RNA.</title>
        <authorList>
            <person name="Ou J.-H."/>
            <person name="Rice C.M."/>
            <person name="Dalgarno L."/>
            <person name="Strauss E.G."/>
            <person name="Strauss J.H."/>
        </authorList>
    </citation>
    <scope>NUCLEOTIDE SEQUENCE [GENOMIC RNA] OF 1067-1149</scope>
</reference>
<proteinExistence type="evidence at protein level"/>
<dbReference type="EC" id="3.1.3.84" evidence="9 6"/>
<dbReference type="EC" id="2.7.7.19" evidence="2"/>
<dbReference type="EC" id="2.7.7.48" evidence="8"/>
<dbReference type="EMBL" id="M20539">
    <property type="protein sequence ID" value="AAA47407.1"/>
    <property type="molecule type" value="Genomic_RNA"/>
</dbReference>
<dbReference type="EMBL" id="K00046">
    <property type="protein sequence ID" value="AAA47403.1"/>
    <property type="status" value="ALT_SEQ"/>
    <property type="molecule type" value="Genomic_RNA"/>
</dbReference>
<dbReference type="PIR" id="A28614">
    <property type="entry name" value="A28614"/>
</dbReference>
<dbReference type="PDB" id="7F0S">
    <property type="method" value="X-ray"/>
    <property type="resolution" value="2.60 A"/>
    <property type="chains" value="A=648-1149"/>
</dbReference>
<dbReference type="PDBsum" id="7F0S"/>
<dbReference type="SMR" id="P13888"/>
<dbReference type="GO" id="GO:0044162">
    <property type="term" value="C:host cell cytoplasmic vesicle membrane"/>
    <property type="evidence" value="ECO:0007669"/>
    <property type="project" value="UniProtKB-SubCell"/>
</dbReference>
<dbReference type="GO" id="GO:0016020">
    <property type="term" value="C:membrane"/>
    <property type="evidence" value="ECO:0007669"/>
    <property type="project" value="UniProtKB-KW"/>
</dbReference>
<dbReference type="GO" id="GO:0016787">
    <property type="term" value="F:hydrolase activity"/>
    <property type="evidence" value="ECO:0007669"/>
    <property type="project" value="UniProtKB-KW"/>
</dbReference>
<dbReference type="GO" id="GO:0046872">
    <property type="term" value="F:metal ion binding"/>
    <property type="evidence" value="ECO:0007669"/>
    <property type="project" value="UniProtKB-KW"/>
</dbReference>
<dbReference type="GO" id="GO:0000166">
    <property type="term" value="F:nucleotide binding"/>
    <property type="evidence" value="ECO:0007669"/>
    <property type="project" value="UniProtKB-KW"/>
</dbReference>
<dbReference type="GO" id="GO:1990817">
    <property type="term" value="F:poly(A) RNA polymerase activity"/>
    <property type="evidence" value="ECO:0007669"/>
    <property type="project" value="UniProtKB-EC"/>
</dbReference>
<dbReference type="GO" id="GO:0003723">
    <property type="term" value="F:RNA binding"/>
    <property type="evidence" value="ECO:0007669"/>
    <property type="project" value="UniProtKB-KW"/>
</dbReference>
<dbReference type="GO" id="GO:0003968">
    <property type="term" value="F:RNA-directed RNA polymerase activity"/>
    <property type="evidence" value="ECO:0007669"/>
    <property type="project" value="UniProtKB-KW"/>
</dbReference>
<dbReference type="GO" id="GO:0006351">
    <property type="term" value="P:DNA-templated transcription"/>
    <property type="evidence" value="ECO:0007669"/>
    <property type="project" value="InterPro"/>
</dbReference>
<dbReference type="GO" id="GO:0039694">
    <property type="term" value="P:viral RNA genome replication"/>
    <property type="evidence" value="ECO:0007669"/>
    <property type="project" value="InterPro"/>
</dbReference>
<dbReference type="CDD" id="cd21557">
    <property type="entry name" value="Macro_X_Nsp3-like"/>
    <property type="match status" value="1"/>
</dbReference>
<dbReference type="CDD" id="cd23250">
    <property type="entry name" value="Togaviridae_RdRp"/>
    <property type="match status" value="1"/>
</dbReference>
<dbReference type="FunFam" id="3.40.220.10:FF:000015">
    <property type="entry name" value="Polyprotein P1234"/>
    <property type="match status" value="1"/>
</dbReference>
<dbReference type="Gene3D" id="3.40.220.10">
    <property type="entry name" value="Leucine Aminopeptidase, subunit E, domain 1"/>
    <property type="match status" value="1"/>
</dbReference>
<dbReference type="Gene3D" id="3.40.50.150">
    <property type="entry name" value="Vaccinia Virus protein VP39"/>
    <property type="match status" value="1"/>
</dbReference>
<dbReference type="InterPro" id="IPR043502">
    <property type="entry name" value="DNA/RNA_pol_sf"/>
</dbReference>
<dbReference type="InterPro" id="IPR002589">
    <property type="entry name" value="Macro_dom"/>
</dbReference>
<dbReference type="InterPro" id="IPR043472">
    <property type="entry name" value="Macro_dom-like"/>
</dbReference>
<dbReference type="InterPro" id="IPR044371">
    <property type="entry name" value="Macro_X_NSP3-like"/>
</dbReference>
<dbReference type="InterPro" id="IPR048891">
    <property type="entry name" value="nsP3_ZBD"/>
</dbReference>
<dbReference type="InterPro" id="IPR001788">
    <property type="entry name" value="RNA-dep_RNA_pol_alsuvir"/>
</dbReference>
<dbReference type="InterPro" id="IPR007094">
    <property type="entry name" value="RNA-dir_pol_PSvirus"/>
</dbReference>
<dbReference type="InterPro" id="IPR029063">
    <property type="entry name" value="SAM-dependent_MTases_sf"/>
</dbReference>
<dbReference type="InterPro" id="IPR047311">
    <property type="entry name" value="Togaviridae_RdRp"/>
</dbReference>
<dbReference type="Pfam" id="PF01661">
    <property type="entry name" value="Macro"/>
    <property type="match status" value="1"/>
</dbReference>
<dbReference type="Pfam" id="PF20852">
    <property type="entry name" value="nsP3_ZBD"/>
    <property type="match status" value="1"/>
</dbReference>
<dbReference type="Pfam" id="PF00978">
    <property type="entry name" value="RdRP_2"/>
    <property type="match status" value="1"/>
</dbReference>
<dbReference type="SMART" id="SM00506">
    <property type="entry name" value="A1pp"/>
    <property type="match status" value="1"/>
</dbReference>
<dbReference type="SUPFAM" id="SSF56672">
    <property type="entry name" value="DNA/RNA polymerases"/>
    <property type="match status" value="1"/>
</dbReference>
<dbReference type="SUPFAM" id="SSF52949">
    <property type="entry name" value="Macro domain-like"/>
    <property type="match status" value="1"/>
</dbReference>
<dbReference type="PROSITE" id="PS51154">
    <property type="entry name" value="MACRO"/>
    <property type="match status" value="1"/>
</dbReference>
<dbReference type="PROSITE" id="PS50507">
    <property type="entry name" value="RDRP_SSRNA_POS"/>
    <property type="match status" value="1"/>
</dbReference>
<organismHost>
    <name type="scientific">Aedes</name>
    <dbReference type="NCBI Taxonomy" id="7158"/>
</organismHost>
<organismHost>
    <name type="scientific">Culex annulirostris</name>
    <name type="common">Common banded mosquito</name>
    <dbReference type="NCBI Taxonomy" id="162997"/>
</organismHost>
<organismHost>
    <name type="scientific">Homo sapiens</name>
    <name type="common">Human</name>
    <dbReference type="NCBI Taxonomy" id="9606"/>
</organismHost>
<organismHost>
    <name type="scientific">Macropus sp.</name>
    <name type="common">kangaroo</name>
    <dbReference type="NCBI Taxonomy" id="9322"/>
</organismHost>
<keyword id="KW-0002">3D-structure</keyword>
<keyword id="KW-1036">Host cytoplasmic vesicle</keyword>
<keyword id="KW-1043">Host membrane</keyword>
<keyword id="KW-0378">Hydrolase</keyword>
<keyword id="KW-0472">Membrane</keyword>
<keyword id="KW-0479">Metal-binding</keyword>
<keyword id="KW-0547">Nucleotide-binding</keyword>
<keyword id="KW-0548">Nucleotidyltransferase</keyword>
<keyword id="KW-0597">Phosphoprotein</keyword>
<keyword id="KW-0694">RNA-binding</keyword>
<keyword id="KW-0696">RNA-directed RNA polymerase</keyword>
<keyword id="KW-0808">Transferase</keyword>
<keyword id="KW-0832">Ubl conjugation</keyword>
<keyword id="KW-0693">Viral RNA replication</keyword>
<keyword id="KW-0862">Zinc</keyword>